<gene>
    <name type="primary">trpE2</name>
    <name type="ordered locus">rrnAC1518</name>
</gene>
<accession>Q5V213</accession>
<comment type="catalytic activity">
    <reaction>
        <text>chorismate + L-glutamine = anthranilate + pyruvate + L-glutamate + H(+)</text>
        <dbReference type="Rhea" id="RHEA:21732"/>
        <dbReference type="ChEBI" id="CHEBI:15361"/>
        <dbReference type="ChEBI" id="CHEBI:15378"/>
        <dbReference type="ChEBI" id="CHEBI:16567"/>
        <dbReference type="ChEBI" id="CHEBI:29748"/>
        <dbReference type="ChEBI" id="CHEBI:29985"/>
        <dbReference type="ChEBI" id="CHEBI:58359"/>
        <dbReference type="EC" id="4.1.3.27"/>
    </reaction>
</comment>
<comment type="cofactor">
    <cofactor evidence="2">
        <name>Mg(2+)</name>
        <dbReference type="ChEBI" id="CHEBI:18420"/>
    </cofactor>
    <text evidence="2">Binds 1 Mg(2+) ion per subunit.</text>
</comment>
<comment type="pathway">
    <text>Amino-acid biosynthesis; L-tryptophan biosynthesis; L-tryptophan from chorismate: step 1/5.</text>
</comment>
<comment type="subunit">
    <text evidence="1">Tetramer of two components I and two components II.</text>
</comment>
<comment type="miscellaneous">
    <text>Component I catalyzes the formation of anthranilate using ammonia rather than glutamine, whereas component II provides glutamine amidotransferase activity.</text>
</comment>
<comment type="similarity">
    <text evidence="3">Belongs to the anthranilate synthase component I family.</text>
</comment>
<sequence length="536" mass="58526">MTLDISREEFVEHAKADRPVVVRTAAELDVDVEPLTAYAALTGRTSDVAANDYTFLLESAEKVASSDPDGAFAPETDDRHARFSFVGYDPRAVVTVTGDESEVEAFDDRYADLVTTDGGDVVDDLRAAMPDVALRNFPAMDRQHLEGGLVGFLSYDAVYDLWLDEVGLDRPDSRFPDAQFVLTTSTVRFDHVEDTVSLVFTPVVRQGEDAGERYGELVAEAERVEAVLSDLSPLSTGGFRREDEVAGPRDEYEDAVERAKEYVLSGDIYQGVISRTRELYGDVDPLGFYEALRAVNPSPYMYLLGYDDLTIVGASPETLVSVAGDHVVSNPIAGTCPRGNSPVEDRRLAGEMLADGKERAEHTMLVDLARNDVRRVAEAGSVRVPEFMNVLKYSHVQHIESTVTGRLAEDKDAFDAARATFPAGTLSGAPKIRAMEIIDELERSPRGPYGGGVGYFDWDGDTDFAIVIRSATVEDEGDRDRITVQAGAGIVADSDPESEYVETEQKMDGVLTALEEIEGEPVDVAERAAGHEEVTR</sequence>
<keyword id="KW-0028">Amino-acid biosynthesis</keyword>
<keyword id="KW-0057">Aromatic amino acid biosynthesis</keyword>
<keyword id="KW-0456">Lyase</keyword>
<keyword id="KW-0460">Magnesium</keyword>
<keyword id="KW-0479">Metal-binding</keyword>
<keyword id="KW-1185">Reference proteome</keyword>
<keyword id="KW-0822">Tryptophan biosynthesis</keyword>
<proteinExistence type="inferred from homology"/>
<reference key="1">
    <citation type="journal article" date="2004" name="Genome Res.">
        <title>Genome sequence of Haloarcula marismortui: a halophilic archaeon from the Dead Sea.</title>
        <authorList>
            <person name="Baliga N.S."/>
            <person name="Bonneau R."/>
            <person name="Facciotti M.T."/>
            <person name="Pan M."/>
            <person name="Glusman G."/>
            <person name="Deutsch E.W."/>
            <person name="Shannon P."/>
            <person name="Chiu Y."/>
            <person name="Weng R.S."/>
            <person name="Gan R.R."/>
            <person name="Hung P."/>
            <person name="Date S.V."/>
            <person name="Marcotte E."/>
            <person name="Hood L."/>
            <person name="Ng W.V."/>
        </authorList>
    </citation>
    <scope>NUCLEOTIDE SEQUENCE [LARGE SCALE GENOMIC DNA]</scope>
    <source>
        <strain>ATCC 43049 / DSM 3752 / JCM 8966 / VKM B-1809</strain>
    </source>
</reference>
<feature type="chain" id="PRO_0000154123" description="Anthranilate synthase component 1 2">
    <location>
        <begin position="1"/>
        <end position="536"/>
    </location>
</feature>
<feature type="binding site" evidence="2">
    <location>
        <position position="59"/>
    </location>
    <ligand>
        <name>L-tryptophan</name>
        <dbReference type="ChEBI" id="CHEBI:57912"/>
    </ligand>
</feature>
<feature type="binding site" evidence="2">
    <location>
        <begin position="299"/>
        <end position="301"/>
    </location>
    <ligand>
        <name>L-tryptophan</name>
        <dbReference type="ChEBI" id="CHEBI:57912"/>
    </ligand>
</feature>
<feature type="binding site" evidence="2">
    <location>
        <begin position="334"/>
        <end position="335"/>
    </location>
    <ligand>
        <name>chorismate</name>
        <dbReference type="ChEBI" id="CHEBI:29748"/>
    </ligand>
</feature>
<feature type="binding site" evidence="2">
    <location>
        <position position="361"/>
    </location>
    <ligand>
        <name>Mg(2+)</name>
        <dbReference type="ChEBI" id="CHEBI:18420"/>
    </ligand>
</feature>
<feature type="binding site" evidence="2">
    <location>
        <position position="449"/>
    </location>
    <ligand>
        <name>chorismate</name>
        <dbReference type="ChEBI" id="CHEBI:29748"/>
    </ligand>
</feature>
<feature type="binding site" evidence="2">
    <location>
        <position position="469"/>
    </location>
    <ligand>
        <name>chorismate</name>
        <dbReference type="ChEBI" id="CHEBI:29748"/>
    </ligand>
</feature>
<feature type="binding site" evidence="2">
    <location>
        <begin position="487"/>
        <end position="489"/>
    </location>
    <ligand>
        <name>chorismate</name>
        <dbReference type="ChEBI" id="CHEBI:29748"/>
    </ligand>
</feature>
<feature type="binding site" evidence="2">
    <location>
        <position position="489"/>
    </location>
    <ligand>
        <name>chorismate</name>
        <dbReference type="ChEBI" id="CHEBI:29748"/>
    </ligand>
</feature>
<feature type="binding site" evidence="2">
    <location>
        <position position="502"/>
    </location>
    <ligand>
        <name>Mg(2+)</name>
        <dbReference type="ChEBI" id="CHEBI:18420"/>
    </ligand>
</feature>
<evidence type="ECO:0000250" key="1"/>
<evidence type="ECO:0000250" key="2">
    <source>
        <dbReference type="UniProtKB" id="P00897"/>
    </source>
</evidence>
<evidence type="ECO:0000305" key="3"/>
<dbReference type="EC" id="4.1.3.27"/>
<dbReference type="EMBL" id="AY596297">
    <property type="protein sequence ID" value="AAV46439.1"/>
    <property type="molecule type" value="Genomic_DNA"/>
</dbReference>
<dbReference type="RefSeq" id="WP_011223672.1">
    <property type="nucleotide sequence ID" value="NC_006396.1"/>
</dbReference>
<dbReference type="SMR" id="Q5V213"/>
<dbReference type="STRING" id="272569.rrnAC1518"/>
<dbReference type="PaxDb" id="272569-rrnAC1518"/>
<dbReference type="EnsemblBacteria" id="AAV46439">
    <property type="protein sequence ID" value="AAV46439"/>
    <property type="gene ID" value="rrnAC1518"/>
</dbReference>
<dbReference type="GeneID" id="40152480"/>
<dbReference type="KEGG" id="hma:rrnAC1518"/>
<dbReference type="PATRIC" id="fig|272569.17.peg.2207"/>
<dbReference type="eggNOG" id="arCOG02014">
    <property type="taxonomic scope" value="Archaea"/>
</dbReference>
<dbReference type="HOGENOM" id="CLU_006493_9_0_2"/>
<dbReference type="UniPathway" id="UPA00035">
    <property type="reaction ID" value="UER00040"/>
</dbReference>
<dbReference type="Proteomes" id="UP000001169">
    <property type="component" value="Chromosome I"/>
</dbReference>
<dbReference type="GO" id="GO:0004049">
    <property type="term" value="F:anthranilate synthase activity"/>
    <property type="evidence" value="ECO:0007669"/>
    <property type="project" value="UniProtKB-EC"/>
</dbReference>
<dbReference type="GO" id="GO:0046872">
    <property type="term" value="F:metal ion binding"/>
    <property type="evidence" value="ECO:0007669"/>
    <property type="project" value="UniProtKB-KW"/>
</dbReference>
<dbReference type="GO" id="GO:0000162">
    <property type="term" value="P:L-tryptophan biosynthetic process"/>
    <property type="evidence" value="ECO:0007669"/>
    <property type="project" value="UniProtKB-UniPathway"/>
</dbReference>
<dbReference type="Gene3D" id="3.60.120.10">
    <property type="entry name" value="Anthranilate synthase"/>
    <property type="match status" value="1"/>
</dbReference>
<dbReference type="InterPro" id="IPR005801">
    <property type="entry name" value="ADC_synthase"/>
</dbReference>
<dbReference type="InterPro" id="IPR019999">
    <property type="entry name" value="Anth_synth_I-like"/>
</dbReference>
<dbReference type="InterPro" id="IPR006805">
    <property type="entry name" value="Anth_synth_I_N"/>
</dbReference>
<dbReference type="InterPro" id="IPR010116">
    <property type="entry name" value="Anthranilate_synth_I_arc_typ"/>
</dbReference>
<dbReference type="InterPro" id="IPR015890">
    <property type="entry name" value="Chorismate_C"/>
</dbReference>
<dbReference type="NCBIfam" id="TIGR01820">
    <property type="entry name" value="TrpE-arch"/>
    <property type="match status" value="1"/>
</dbReference>
<dbReference type="PANTHER" id="PTHR11236">
    <property type="entry name" value="AMINOBENZOATE/ANTHRANILATE SYNTHASE"/>
    <property type="match status" value="1"/>
</dbReference>
<dbReference type="PANTHER" id="PTHR11236:SF9">
    <property type="entry name" value="ANTHRANILATE SYNTHASE COMPONENT 1"/>
    <property type="match status" value="1"/>
</dbReference>
<dbReference type="Pfam" id="PF04715">
    <property type="entry name" value="Anth_synt_I_N"/>
    <property type="match status" value="1"/>
</dbReference>
<dbReference type="Pfam" id="PF00425">
    <property type="entry name" value="Chorismate_bind"/>
    <property type="match status" value="1"/>
</dbReference>
<dbReference type="PRINTS" id="PR00095">
    <property type="entry name" value="ANTSNTHASEI"/>
</dbReference>
<dbReference type="SUPFAM" id="SSF56322">
    <property type="entry name" value="ADC synthase"/>
    <property type="match status" value="1"/>
</dbReference>
<protein>
    <recommendedName>
        <fullName>Anthranilate synthase component 1 2</fullName>
        <ecNumber>4.1.3.27</ecNumber>
    </recommendedName>
    <alternativeName>
        <fullName>Anthranilate synthase component I 2</fullName>
    </alternativeName>
</protein>
<organism>
    <name type="scientific">Haloarcula marismortui (strain ATCC 43049 / DSM 3752 / JCM 8966 / VKM B-1809)</name>
    <name type="common">Halobacterium marismortui</name>
    <dbReference type="NCBI Taxonomy" id="272569"/>
    <lineage>
        <taxon>Archaea</taxon>
        <taxon>Methanobacteriati</taxon>
        <taxon>Methanobacteriota</taxon>
        <taxon>Stenosarchaea group</taxon>
        <taxon>Halobacteria</taxon>
        <taxon>Halobacteriales</taxon>
        <taxon>Haloarculaceae</taxon>
        <taxon>Haloarcula</taxon>
    </lineage>
</organism>
<name>TRPE2_HALMA</name>